<proteinExistence type="inferred from homology"/>
<organism>
    <name type="scientific">Pasteurella multocida (strain Pm70)</name>
    <dbReference type="NCBI Taxonomy" id="272843"/>
    <lineage>
        <taxon>Bacteria</taxon>
        <taxon>Pseudomonadati</taxon>
        <taxon>Pseudomonadota</taxon>
        <taxon>Gammaproteobacteria</taxon>
        <taxon>Pasteurellales</taxon>
        <taxon>Pasteurellaceae</taxon>
        <taxon>Pasteurella</taxon>
    </lineage>
</organism>
<evidence type="ECO:0000305" key="1"/>
<sequence length="142" mass="16761">MKVLFSYGTYNNRPYKACGVYESDNRENDGVITDYLSTIPDSYADNGFKVLAAVKDPTITREWIDSQAFEALIEHDQIKVGFYLLDDMEEEDIPDDVDERDTDPRFIPRKEFAYLLEKWLDFYHRPITDMNYQEIIDTKDAY</sequence>
<protein>
    <recommendedName>
        <fullName>UPF0275 protein PM0505</fullName>
    </recommendedName>
</protein>
<dbReference type="EMBL" id="AE004439">
    <property type="protein sequence ID" value="AAK02589.1"/>
    <property type="molecule type" value="Genomic_DNA"/>
</dbReference>
<dbReference type="RefSeq" id="WP_010906693.1">
    <property type="nucleotide sequence ID" value="NC_002663.1"/>
</dbReference>
<dbReference type="STRING" id="272843.PM0505"/>
<dbReference type="EnsemblBacteria" id="AAK02589">
    <property type="protein sequence ID" value="AAK02589"/>
    <property type="gene ID" value="PM0505"/>
</dbReference>
<dbReference type="KEGG" id="pmu:PM0505"/>
<dbReference type="PATRIC" id="fig|272843.6.peg.511"/>
<dbReference type="HOGENOM" id="CLU_147996_0_0_6"/>
<dbReference type="OrthoDB" id="89406at2"/>
<dbReference type="Proteomes" id="UP000000809">
    <property type="component" value="Chromosome"/>
</dbReference>
<dbReference type="InterPro" id="IPR035416">
    <property type="entry name" value="DUF5376"/>
</dbReference>
<dbReference type="Pfam" id="PF17346">
    <property type="entry name" value="DUF5376"/>
    <property type="match status" value="1"/>
</dbReference>
<accession>Q9CNC7</accession>
<gene>
    <name type="ordered locus">PM0505</name>
</gene>
<name>Y505_PASMU</name>
<keyword id="KW-1185">Reference proteome</keyword>
<comment type="similarity">
    <text evidence="1">Belongs to the UPF0275 family.</text>
</comment>
<reference key="1">
    <citation type="journal article" date="2001" name="Proc. Natl. Acad. Sci. U.S.A.">
        <title>Complete genomic sequence of Pasteurella multocida Pm70.</title>
        <authorList>
            <person name="May B.J."/>
            <person name="Zhang Q."/>
            <person name="Li L.L."/>
            <person name="Paustian M.L."/>
            <person name="Whittam T.S."/>
            <person name="Kapur V."/>
        </authorList>
    </citation>
    <scope>NUCLEOTIDE SEQUENCE [LARGE SCALE GENOMIC DNA]</scope>
    <source>
        <strain>Pm70</strain>
    </source>
</reference>
<feature type="chain" id="PRO_0000220585" description="UPF0275 protein PM0505">
    <location>
        <begin position="1"/>
        <end position="142"/>
    </location>
</feature>